<keyword id="KW-0924">Ammonia transport</keyword>
<keyword id="KW-1003">Cell membrane</keyword>
<keyword id="KW-0968">Cytoplasmic vesicle</keyword>
<keyword id="KW-0967">Endosome</keyword>
<keyword id="KW-0472">Membrane</keyword>
<keyword id="KW-1185">Reference proteome</keyword>
<keyword id="KW-0812">Transmembrane</keyword>
<keyword id="KW-1133">Transmembrane helix</keyword>
<keyword id="KW-0813">Transport</keyword>
<comment type="function">
    <text evidence="3 4">Ammonium transporter that mediates the import of ammonium in prespore cells. Controls ammonium homeostasis during growth and development. Ammonium has been shown to function as a morphogen at multiple steps during the development. May function as an ammonia sensor that relays information concerning ammonia concentrations to the signaling pathway involved in the slug versus culmination choice and regulates prestalk gene expression.</text>
</comment>
<comment type="subcellular location">
    <subcellularLocation>
        <location evidence="5">Cell membrane</location>
        <topology evidence="5">Multi-pass membrane protein</topology>
    </subcellularLocation>
    <subcellularLocation>
        <location evidence="5">Endosome membrane</location>
        <topology evidence="5">Multi-pass membrane protein</topology>
    </subcellularLocation>
    <subcellularLocation>
        <location evidence="5">Cytoplasmic vesicle</location>
        <location evidence="5">Phagosome membrane</location>
        <topology evidence="5">Multi-pass membrane protein</topology>
    </subcellularLocation>
</comment>
<comment type="developmental stage">
    <text evidence="3">Predominantly found in the prespores of the slug.</text>
</comment>
<comment type="similarity">
    <text evidence="6">Belongs to the ammonia transporter channel (TC 1.A.11.2) family.</text>
</comment>
<comment type="sequence caution" evidence="6">
    <conflict type="frameshift">
        <sequence resource="EMBL-CDS" id="AAP47147"/>
    </conflict>
</comment>
<dbReference type="EMBL" id="AF510718">
    <property type="protein sequence ID" value="AAP47147.1"/>
    <property type="status" value="ALT_FRAME"/>
    <property type="molecule type" value="mRNA"/>
</dbReference>
<dbReference type="EMBL" id="AB089904">
    <property type="protein sequence ID" value="BAC07553.1"/>
    <property type="molecule type" value="Genomic_DNA"/>
</dbReference>
<dbReference type="EMBL" id="AAFI02000003">
    <property type="protein sequence ID" value="EAL73164.1"/>
    <property type="molecule type" value="Genomic_DNA"/>
</dbReference>
<dbReference type="RefSeq" id="XP_647385.1">
    <property type="nucleotide sequence ID" value="XM_642293.1"/>
</dbReference>
<dbReference type="SMR" id="Q8MXY0"/>
<dbReference type="FunCoup" id="Q8MXY0">
    <property type="interactions" value="1"/>
</dbReference>
<dbReference type="STRING" id="44689.Q8MXY0"/>
<dbReference type="PaxDb" id="44689-DDB0191130"/>
<dbReference type="EnsemblProtists" id="EAL73164">
    <property type="protein sequence ID" value="EAL73164"/>
    <property type="gene ID" value="DDB_G0267424"/>
</dbReference>
<dbReference type="GeneID" id="8616194"/>
<dbReference type="KEGG" id="ddi:DDB_G0267424"/>
<dbReference type="dictyBase" id="DDB_G0267424">
    <property type="gene designation" value="amtC"/>
</dbReference>
<dbReference type="VEuPathDB" id="AmoebaDB:DDB_G0267424"/>
<dbReference type="eggNOG" id="KOG0682">
    <property type="taxonomic scope" value="Eukaryota"/>
</dbReference>
<dbReference type="HOGENOM" id="CLU_000445_33_1_1"/>
<dbReference type="InParanoid" id="Q8MXY0"/>
<dbReference type="OMA" id="NVMMKNM"/>
<dbReference type="PhylomeDB" id="Q8MXY0"/>
<dbReference type="PRO" id="PR:Q8MXY0"/>
<dbReference type="Proteomes" id="UP000002195">
    <property type="component" value="Chromosome 1"/>
</dbReference>
<dbReference type="GO" id="GO:0010008">
    <property type="term" value="C:endosome membrane"/>
    <property type="evidence" value="ECO:0007669"/>
    <property type="project" value="UniProtKB-SubCell"/>
</dbReference>
<dbReference type="GO" id="GO:0048471">
    <property type="term" value="C:perinuclear region of cytoplasm"/>
    <property type="evidence" value="ECO:0000314"/>
    <property type="project" value="dictyBase"/>
</dbReference>
<dbReference type="GO" id="GO:0030670">
    <property type="term" value="C:phagocytic vesicle membrane"/>
    <property type="evidence" value="ECO:0000314"/>
    <property type="project" value="dictyBase"/>
</dbReference>
<dbReference type="GO" id="GO:0005886">
    <property type="term" value="C:plasma membrane"/>
    <property type="evidence" value="ECO:0000314"/>
    <property type="project" value="dictyBase"/>
</dbReference>
<dbReference type="GO" id="GO:0008519">
    <property type="term" value="F:ammonium channel activity"/>
    <property type="evidence" value="ECO:0000250"/>
    <property type="project" value="dictyBase"/>
</dbReference>
<dbReference type="GO" id="GO:0097272">
    <property type="term" value="P:ammonium homeostasis"/>
    <property type="evidence" value="ECO:0000318"/>
    <property type="project" value="GO_Central"/>
</dbReference>
<dbReference type="GO" id="GO:0072488">
    <property type="term" value="P:ammonium transmembrane transport"/>
    <property type="evidence" value="ECO:0000315"/>
    <property type="project" value="dictyBase"/>
</dbReference>
<dbReference type="GO" id="GO:0031154">
    <property type="term" value="P:culmination involved in sorocarp development"/>
    <property type="evidence" value="ECO:0000315"/>
    <property type="project" value="dictyBase"/>
</dbReference>
<dbReference type="GO" id="GO:0050793">
    <property type="term" value="P:regulation of developmental process"/>
    <property type="evidence" value="ECO:0000315"/>
    <property type="project" value="dictyBase"/>
</dbReference>
<dbReference type="GO" id="GO:0046903">
    <property type="term" value="P:secretion"/>
    <property type="evidence" value="ECO:0000315"/>
    <property type="project" value="dictyBase"/>
</dbReference>
<dbReference type="FunFam" id="1.10.3430.10:FF:000008">
    <property type="entry name" value="Ammonium transporter"/>
    <property type="match status" value="1"/>
</dbReference>
<dbReference type="Gene3D" id="1.10.3430.10">
    <property type="entry name" value="Ammonium transporter AmtB like domains"/>
    <property type="match status" value="1"/>
</dbReference>
<dbReference type="InterPro" id="IPR029020">
    <property type="entry name" value="Ammonium/urea_transptr"/>
</dbReference>
<dbReference type="InterPro" id="IPR001905">
    <property type="entry name" value="Ammonium_transpt"/>
</dbReference>
<dbReference type="InterPro" id="IPR024041">
    <property type="entry name" value="NH4_transpt_AmtB-like_dom"/>
</dbReference>
<dbReference type="NCBIfam" id="TIGR00836">
    <property type="entry name" value="amt"/>
    <property type="match status" value="1"/>
</dbReference>
<dbReference type="PANTHER" id="PTHR11730">
    <property type="entry name" value="AMMONIUM TRANSPORTER"/>
    <property type="match status" value="1"/>
</dbReference>
<dbReference type="PANTHER" id="PTHR11730:SF115">
    <property type="entry name" value="AMMONIUM TRANSPORTER 3"/>
    <property type="match status" value="1"/>
</dbReference>
<dbReference type="Pfam" id="PF00909">
    <property type="entry name" value="Ammonium_transp"/>
    <property type="match status" value="1"/>
</dbReference>
<dbReference type="SUPFAM" id="SSF111352">
    <property type="entry name" value="Ammonium transporter"/>
    <property type="match status" value="1"/>
</dbReference>
<protein>
    <recommendedName>
        <fullName>Ammonium transporter 3</fullName>
    </recommendedName>
</protein>
<name>AMT3_DICDI</name>
<gene>
    <name type="primary">amtC</name>
    <name type="ORF">DDB_G0267424</name>
</gene>
<organism>
    <name type="scientific">Dictyostelium discoideum</name>
    <name type="common">Social amoeba</name>
    <dbReference type="NCBI Taxonomy" id="44689"/>
    <lineage>
        <taxon>Eukaryota</taxon>
        <taxon>Amoebozoa</taxon>
        <taxon>Evosea</taxon>
        <taxon>Eumycetozoa</taxon>
        <taxon>Dictyostelia</taxon>
        <taxon>Dictyosteliales</taxon>
        <taxon>Dictyosteliaceae</taxon>
        <taxon>Dictyostelium</taxon>
    </lineage>
</organism>
<sequence>MEQFSTSSSESSDSSSEYSLEFYMDTSWVLDAANLVFFMQAGFGMLEAGMVRAKNTKSILLKNLINTAICAISYYCVGHSFAYGKVNPNSFVGFGNFFLMDYTHYAYWMIQWAYAATATTIATGAMAERLQLHCYILFTLVQTILIYPFVAHWIWSQNGWLFDLGIVDFAGGAVIHIVAGITGACGSFLLGPRIGRFNQESGKPKNLPGHSVVLMSLGAMILWYSWYGYTAGASLGMTRSRVLPASRVSVVVTLSGATGLITVLGIGKIFNGHYDLVKGINGLIAGLVSSTSSCAYIEPWAAIIIGFIGGIVYWFSSWALLNWLRLDDPVDSTAIHLFGGCWSLISVAFFATHGRVRNPDIILPGGIFYGGGISLLWVQLVGMVLAILWAGFLSGIFFFTMDYFGKLRVDVDTELAGLDNSNHGGSAYIFD</sequence>
<accession>Q8MXY0</accession>
<accession>Q55FZ8</accession>
<accession>Q7Z1M2</accession>
<evidence type="ECO:0000250" key="1"/>
<evidence type="ECO:0000255" key="2"/>
<evidence type="ECO:0000269" key="3">
    <source>
    </source>
</evidence>
<evidence type="ECO:0000269" key="4">
    <source>
    </source>
</evidence>
<evidence type="ECO:0000269" key="5">
    <source>
    </source>
</evidence>
<evidence type="ECO:0000305" key="6"/>
<feature type="chain" id="PRO_0000365575" description="Ammonium transporter 3">
    <location>
        <begin position="1"/>
        <end position="431"/>
    </location>
</feature>
<feature type="topological domain" description="Extracellular" evidence="1">
    <location>
        <begin position="1"/>
        <end position="27"/>
    </location>
</feature>
<feature type="transmembrane region" description="Helical" evidence="2">
    <location>
        <begin position="28"/>
        <end position="48"/>
    </location>
</feature>
<feature type="topological domain" description="Cytoplasmic" evidence="1">
    <location>
        <begin position="49"/>
        <end position="63"/>
    </location>
</feature>
<feature type="transmembrane region" description="Helical" evidence="2">
    <location>
        <begin position="64"/>
        <end position="84"/>
    </location>
</feature>
<feature type="topological domain" description="Extracellular" evidence="1">
    <location>
        <begin position="85"/>
        <end position="102"/>
    </location>
</feature>
<feature type="transmembrane region" description="Helical" evidence="2">
    <location>
        <begin position="103"/>
        <end position="125"/>
    </location>
</feature>
<feature type="topological domain" description="Cytoplasmic" evidence="1">
    <location>
        <begin position="126"/>
        <end position="134"/>
    </location>
</feature>
<feature type="transmembrane region" description="Helical" evidence="2">
    <location>
        <begin position="135"/>
        <end position="155"/>
    </location>
</feature>
<feature type="topological domain" description="Extracellular" evidence="1">
    <location>
        <begin position="156"/>
        <end position="160"/>
    </location>
</feature>
<feature type="transmembrane region" description="Helical" evidence="2">
    <location>
        <begin position="161"/>
        <end position="181"/>
    </location>
</feature>
<feature type="topological domain" description="Cytoplasmic" evidence="1">
    <location>
        <begin position="182"/>
        <end position="211"/>
    </location>
</feature>
<feature type="transmembrane region" description="Helical" evidence="2">
    <location>
        <begin position="212"/>
        <end position="232"/>
    </location>
</feature>
<feature type="topological domain" description="Extracellular" evidence="1">
    <location>
        <begin position="233"/>
        <end position="249"/>
    </location>
</feature>
<feature type="transmembrane region" description="Helical" evidence="2">
    <location>
        <begin position="250"/>
        <end position="270"/>
    </location>
</feature>
<feature type="topological domain" description="Cytoplasmic" evidence="1">
    <location>
        <begin position="271"/>
        <end position="300"/>
    </location>
</feature>
<feature type="transmembrane region" description="Helical" evidence="2">
    <location>
        <begin position="301"/>
        <end position="321"/>
    </location>
</feature>
<feature type="topological domain" description="Extracellular" evidence="1">
    <location>
        <begin position="322"/>
        <end position="333"/>
    </location>
</feature>
<feature type="transmembrane region" description="Helical" evidence="2">
    <location>
        <begin position="334"/>
        <end position="354"/>
    </location>
</feature>
<feature type="topological domain" description="Cytoplasmic" evidence="1">
    <location>
        <begin position="355"/>
        <end position="357"/>
    </location>
</feature>
<feature type="transmembrane region" description="Helical" evidence="2">
    <location>
        <begin position="358"/>
        <end position="378"/>
    </location>
</feature>
<feature type="topological domain" description="Extracellular" evidence="1">
    <location>
        <position position="379"/>
    </location>
</feature>
<feature type="transmembrane region" description="Helical" evidence="2">
    <location>
        <begin position="380"/>
        <end position="400"/>
    </location>
</feature>
<feature type="topological domain" description="Cytoplasmic" evidence="1">
    <location>
        <begin position="401"/>
        <end position="431"/>
    </location>
</feature>
<feature type="sequence conflict" description="In Ref. 1; AAP47147." evidence="6" ref="1">
    <original>H</original>
    <variation>P</variation>
    <location>
        <position position="353"/>
    </location>
</feature>
<feature type="sequence conflict" description="In Ref. 1; AAP47147." evidence="6" ref="1">
    <original>I</original>
    <variation>L</variation>
    <location>
        <position position="362"/>
    </location>
</feature>
<feature type="sequence conflict" description="In Ref. 1; AAP47147." evidence="6" ref="1">
    <original>F</original>
    <variation>I</variation>
    <location>
        <position position="368"/>
    </location>
</feature>
<feature type="sequence conflict" description="In Ref. 1; AAP47147." evidence="6" ref="1">
    <original>Q</original>
    <variation>P</variation>
    <location>
        <position position="379"/>
    </location>
</feature>
<feature type="sequence conflict" description="In Ref. 1; AAP47147." evidence="6" ref="1">
    <original>T</original>
    <variation>S</variation>
    <location>
        <position position="413"/>
    </location>
</feature>
<feature type="sequence conflict" description="In Ref. 1; AAP47147." evidence="6" ref="1">
    <original>S</original>
    <variation>R</variation>
    <location>
        <position position="426"/>
    </location>
</feature>
<proteinExistence type="evidence at transcript level"/>
<reference key="1">
    <citation type="submission" date="2002-05" db="EMBL/GenBank/DDBJ databases">
        <title>Cloning and characterization of three ammonium transporter genes in AX2 strain of Dictyostelium discoideum.</title>
        <authorList>
            <person name="Chen Y."/>
            <person name="Huang C.-H."/>
        </authorList>
    </citation>
    <scope>NUCLEOTIDE SEQUENCE [MRNA]</scope>
    <source>
        <strain>AX2</strain>
    </source>
</reference>
<reference key="2">
    <citation type="journal article" date="2007" name="Eukaryot. Cell">
        <title>Regulation of ammonia homeostasis by the ammonium transporter AmtA in Dictyostelium discoideum.</title>
        <authorList>
            <person name="Yoshino R."/>
            <person name="Morio T."/>
            <person name="Yamada Y."/>
            <person name="Kuwayama H."/>
            <person name="Sameshima M."/>
            <person name="Tanaka Y."/>
            <person name="Sesaki H."/>
            <person name="Iijima M."/>
        </authorList>
    </citation>
    <scope>NUCLEOTIDE SEQUENCE [GENOMIC DNA]</scope>
    <source>
        <strain>AX4</strain>
    </source>
</reference>
<reference key="3">
    <citation type="journal article" date="2005" name="Nature">
        <title>The genome of the social amoeba Dictyostelium discoideum.</title>
        <authorList>
            <person name="Eichinger L."/>
            <person name="Pachebat J.A."/>
            <person name="Gloeckner G."/>
            <person name="Rajandream M.A."/>
            <person name="Sucgang R."/>
            <person name="Berriman M."/>
            <person name="Song J."/>
            <person name="Olsen R."/>
            <person name="Szafranski K."/>
            <person name="Xu Q."/>
            <person name="Tunggal B."/>
            <person name="Kummerfeld S."/>
            <person name="Madera M."/>
            <person name="Konfortov B.A."/>
            <person name="Rivero F."/>
            <person name="Bankier A.T."/>
            <person name="Lehmann R."/>
            <person name="Hamlin N."/>
            <person name="Davies R."/>
            <person name="Gaudet P."/>
            <person name="Fey P."/>
            <person name="Pilcher K."/>
            <person name="Chen G."/>
            <person name="Saunders D."/>
            <person name="Sodergren E.J."/>
            <person name="Davis P."/>
            <person name="Kerhornou A."/>
            <person name="Nie X."/>
            <person name="Hall N."/>
            <person name="Anjard C."/>
            <person name="Hemphill L."/>
            <person name="Bason N."/>
            <person name="Farbrother P."/>
            <person name="Desany B."/>
            <person name="Just E."/>
            <person name="Morio T."/>
            <person name="Rost R."/>
            <person name="Churcher C.M."/>
            <person name="Cooper J."/>
            <person name="Haydock S."/>
            <person name="van Driessche N."/>
            <person name="Cronin A."/>
            <person name="Goodhead I."/>
            <person name="Muzny D.M."/>
            <person name="Mourier T."/>
            <person name="Pain A."/>
            <person name="Lu M."/>
            <person name="Harper D."/>
            <person name="Lindsay R."/>
            <person name="Hauser H."/>
            <person name="James K.D."/>
            <person name="Quiles M."/>
            <person name="Madan Babu M."/>
            <person name="Saito T."/>
            <person name="Buchrieser C."/>
            <person name="Wardroper A."/>
            <person name="Felder M."/>
            <person name="Thangavelu M."/>
            <person name="Johnson D."/>
            <person name="Knights A."/>
            <person name="Loulseged H."/>
            <person name="Mungall K.L."/>
            <person name="Oliver K."/>
            <person name="Price C."/>
            <person name="Quail M.A."/>
            <person name="Urushihara H."/>
            <person name="Hernandez J."/>
            <person name="Rabbinowitsch E."/>
            <person name="Steffen D."/>
            <person name="Sanders M."/>
            <person name="Ma J."/>
            <person name="Kohara Y."/>
            <person name="Sharp S."/>
            <person name="Simmonds M.N."/>
            <person name="Spiegler S."/>
            <person name="Tivey A."/>
            <person name="Sugano S."/>
            <person name="White B."/>
            <person name="Walker D."/>
            <person name="Woodward J.R."/>
            <person name="Winckler T."/>
            <person name="Tanaka Y."/>
            <person name="Shaulsky G."/>
            <person name="Schleicher M."/>
            <person name="Weinstock G.M."/>
            <person name="Rosenthal A."/>
            <person name="Cox E.C."/>
            <person name="Chisholm R.L."/>
            <person name="Gibbs R.A."/>
            <person name="Loomis W.F."/>
            <person name="Platzer M."/>
            <person name="Kay R.R."/>
            <person name="Williams J.G."/>
            <person name="Dear P.H."/>
            <person name="Noegel A.A."/>
            <person name="Barrell B.G."/>
            <person name="Kuspa A."/>
        </authorList>
    </citation>
    <scope>NUCLEOTIDE SEQUENCE [LARGE SCALE GENOMIC DNA]</scope>
    <source>
        <strain>AX4</strain>
    </source>
</reference>
<reference key="4">
    <citation type="journal article" date="2003" name="Differentiation">
        <title>Temporal and spatial expression of ammonium transporter genes during growth and development of Dictyostelium discoideum.</title>
        <authorList>
            <person name="Follstaedt S.C."/>
            <person name="Kirsten J.H."/>
            <person name="Singleton C.K."/>
        </authorList>
    </citation>
    <scope>FUNCTION</scope>
    <scope>DEVELOPMENTAL STAGE</scope>
</reference>
<reference key="5">
    <citation type="journal article" date="2005" name="Dev. Biol.">
        <title>Ammonium transporter C of Dictyostelium discoideum is required for correct prestalk gene expression and for regulating the choice between slug migration and culmination.</title>
        <authorList>
            <person name="Kirsten J.H."/>
            <person name="Xiong Y."/>
            <person name="Dunbar A.J."/>
            <person name="Rai M."/>
            <person name="Singleton C.K."/>
        </authorList>
    </citation>
    <scope>FUNCTION</scope>
</reference>
<reference key="6">
    <citation type="journal article" date="2008" name="BMC Cell Biol.">
        <title>Subcellular localization of ammonium transporters in Dictyostelium discoideum.</title>
        <authorList>
            <person name="Kirsten J.H."/>
            <person name="Xiong Y."/>
            <person name="Davis C.T."/>
            <person name="Singleton C.K."/>
        </authorList>
    </citation>
    <scope>SUBCELLULAR LOCATION</scope>
</reference>